<keyword id="KW-0997">Cell inner membrane</keyword>
<keyword id="KW-1003">Cell membrane</keyword>
<keyword id="KW-0472">Membrane</keyword>
<keyword id="KW-0520">NAD</keyword>
<keyword id="KW-0874">Quinone</keyword>
<keyword id="KW-1278">Translocase</keyword>
<keyword id="KW-0812">Transmembrane</keyword>
<keyword id="KW-1133">Transmembrane helix</keyword>
<keyword id="KW-0830">Ubiquinone</keyword>
<organism>
    <name type="scientific">Burkholderia pseudomallei (strain 1710b)</name>
    <dbReference type="NCBI Taxonomy" id="320372"/>
    <lineage>
        <taxon>Bacteria</taxon>
        <taxon>Pseudomonadati</taxon>
        <taxon>Pseudomonadota</taxon>
        <taxon>Betaproteobacteria</taxon>
        <taxon>Burkholderiales</taxon>
        <taxon>Burkholderiaceae</taxon>
        <taxon>Burkholderia</taxon>
        <taxon>pseudomallei group</taxon>
    </lineage>
</organism>
<name>NUOH_BURP1</name>
<gene>
    <name evidence="1" type="primary">nuoH</name>
    <name type="ordered locus">BURPS1710b_1442</name>
</gene>
<dbReference type="EC" id="7.1.1.-" evidence="1"/>
<dbReference type="EMBL" id="CP000124">
    <property type="protein sequence ID" value="ABA47937.1"/>
    <property type="status" value="ALT_INIT"/>
    <property type="molecule type" value="Genomic_DNA"/>
</dbReference>
<dbReference type="RefSeq" id="WP_004196426.1">
    <property type="nucleotide sequence ID" value="NC_007434.1"/>
</dbReference>
<dbReference type="SMR" id="Q3JUA2"/>
<dbReference type="EnsemblBacteria" id="ABA47937">
    <property type="protein sequence ID" value="ABA47937"/>
    <property type="gene ID" value="BURPS1710b_1442"/>
</dbReference>
<dbReference type="GeneID" id="93059701"/>
<dbReference type="KEGG" id="bpm:BURPS1710b_1442"/>
<dbReference type="HOGENOM" id="CLU_015134_0_1_4"/>
<dbReference type="Proteomes" id="UP000002700">
    <property type="component" value="Chromosome I"/>
</dbReference>
<dbReference type="GO" id="GO:0005886">
    <property type="term" value="C:plasma membrane"/>
    <property type="evidence" value="ECO:0007669"/>
    <property type="project" value="UniProtKB-SubCell"/>
</dbReference>
<dbReference type="GO" id="GO:0003954">
    <property type="term" value="F:NADH dehydrogenase activity"/>
    <property type="evidence" value="ECO:0007669"/>
    <property type="project" value="TreeGrafter"/>
</dbReference>
<dbReference type="GO" id="GO:0016655">
    <property type="term" value="F:oxidoreductase activity, acting on NAD(P)H, quinone or similar compound as acceptor"/>
    <property type="evidence" value="ECO:0007669"/>
    <property type="project" value="UniProtKB-UniRule"/>
</dbReference>
<dbReference type="GO" id="GO:0048038">
    <property type="term" value="F:quinone binding"/>
    <property type="evidence" value="ECO:0007669"/>
    <property type="project" value="UniProtKB-KW"/>
</dbReference>
<dbReference type="GO" id="GO:0009060">
    <property type="term" value="P:aerobic respiration"/>
    <property type="evidence" value="ECO:0007669"/>
    <property type="project" value="TreeGrafter"/>
</dbReference>
<dbReference type="HAMAP" id="MF_01350">
    <property type="entry name" value="NDH1_NuoH"/>
    <property type="match status" value="1"/>
</dbReference>
<dbReference type="InterPro" id="IPR001694">
    <property type="entry name" value="NADH_UbQ_OxRdtase_su1/FPO"/>
</dbReference>
<dbReference type="InterPro" id="IPR018086">
    <property type="entry name" value="NADH_UbQ_OxRdtase_su1_CS"/>
</dbReference>
<dbReference type="NCBIfam" id="NF004741">
    <property type="entry name" value="PRK06076.1-2"/>
    <property type="match status" value="1"/>
</dbReference>
<dbReference type="NCBIfam" id="NF004742">
    <property type="entry name" value="PRK06076.1-3"/>
    <property type="match status" value="1"/>
</dbReference>
<dbReference type="PANTHER" id="PTHR11432">
    <property type="entry name" value="NADH DEHYDROGENASE SUBUNIT 1"/>
    <property type="match status" value="1"/>
</dbReference>
<dbReference type="PANTHER" id="PTHR11432:SF3">
    <property type="entry name" value="NADH-UBIQUINONE OXIDOREDUCTASE CHAIN 1"/>
    <property type="match status" value="1"/>
</dbReference>
<dbReference type="Pfam" id="PF00146">
    <property type="entry name" value="NADHdh"/>
    <property type="match status" value="1"/>
</dbReference>
<dbReference type="PROSITE" id="PS00668">
    <property type="entry name" value="COMPLEX1_ND1_2"/>
    <property type="match status" value="1"/>
</dbReference>
<evidence type="ECO:0000255" key="1">
    <source>
        <dbReference type="HAMAP-Rule" id="MF_01350"/>
    </source>
</evidence>
<evidence type="ECO:0000305" key="2"/>
<proteinExistence type="inferred from homology"/>
<comment type="function">
    <text evidence="1">NDH-1 shuttles electrons from NADH, via FMN and iron-sulfur (Fe-S) centers, to quinones in the respiratory chain. The immediate electron acceptor for the enzyme in this species is believed to be ubiquinone. Couples the redox reaction to proton translocation (for every two electrons transferred, four hydrogen ions are translocated across the cytoplasmic membrane), and thus conserves the redox energy in a proton gradient. This subunit may bind ubiquinone.</text>
</comment>
<comment type="catalytic activity">
    <reaction evidence="1">
        <text>a quinone + NADH + 5 H(+)(in) = a quinol + NAD(+) + 4 H(+)(out)</text>
        <dbReference type="Rhea" id="RHEA:57888"/>
        <dbReference type="ChEBI" id="CHEBI:15378"/>
        <dbReference type="ChEBI" id="CHEBI:24646"/>
        <dbReference type="ChEBI" id="CHEBI:57540"/>
        <dbReference type="ChEBI" id="CHEBI:57945"/>
        <dbReference type="ChEBI" id="CHEBI:132124"/>
    </reaction>
</comment>
<comment type="subunit">
    <text evidence="1">NDH-1 is composed of 14 different subunits. Subunits NuoA, H, J, K, L, M, N constitute the membrane sector of the complex.</text>
</comment>
<comment type="subcellular location">
    <subcellularLocation>
        <location evidence="1">Cell inner membrane</location>
        <topology evidence="1">Multi-pass membrane protein</topology>
    </subcellularLocation>
</comment>
<comment type="similarity">
    <text evidence="1">Belongs to the complex I subunit 1 family.</text>
</comment>
<comment type="sequence caution" evidence="2">
    <conflict type="erroneous initiation">
        <sequence resource="EMBL-CDS" id="ABA47937"/>
    </conflict>
</comment>
<sequence length="354" mass="39188">MSLFDTINSGGAQLLGVAWPTVWALVRILVVAVVILLCVAYLILWERKLIGWMHVRLGPNRVGPAGLLQPIADVLKLLLKEVIRPTAASRWLYLVAPVMTVVPAFAVWAVIPFQAGAVLANINAGLLYAMAISSIGVYAVILAGWASNSKYAFLGAMRAAAQMVSYEISMGFALVLVLMTAGSLNLSEIVGSQQHGFFAGHGVNFLSWNWLPLLPVFVIYFISGIAETNRHPFDVVEGESEIVAGHMIDYSGMAFALFFLAEYINMIVISALAATLFLGGWDAPFEFLSFIPGIFWLVLKIFALLSVFIWARATFPRYRYDQIMRLGWKVFLPVCVFWVIVVGFWMMSPLNIWK</sequence>
<feature type="chain" id="PRO_0000244907" description="NADH-quinone oxidoreductase subunit H">
    <location>
        <begin position="1"/>
        <end position="354"/>
    </location>
</feature>
<feature type="transmembrane region" description="Helical" evidence="1">
    <location>
        <begin position="25"/>
        <end position="45"/>
    </location>
</feature>
<feature type="transmembrane region" description="Helical" evidence="1">
    <location>
        <begin position="91"/>
        <end position="111"/>
    </location>
</feature>
<feature type="transmembrane region" description="Helical" evidence="1">
    <location>
        <begin position="126"/>
        <end position="146"/>
    </location>
</feature>
<feature type="transmembrane region" description="Helical" evidence="1">
    <location>
        <begin position="170"/>
        <end position="190"/>
    </location>
</feature>
<feature type="transmembrane region" description="Helical" evidence="1">
    <location>
        <begin position="205"/>
        <end position="225"/>
    </location>
</feature>
<feature type="transmembrane region" description="Helical" evidence="1">
    <location>
        <begin position="253"/>
        <end position="273"/>
    </location>
</feature>
<feature type="transmembrane region" description="Helical" evidence="1">
    <location>
        <begin position="290"/>
        <end position="310"/>
    </location>
</feature>
<feature type="transmembrane region" description="Helical" evidence="1">
    <location>
        <begin position="330"/>
        <end position="350"/>
    </location>
</feature>
<protein>
    <recommendedName>
        <fullName evidence="1">NADH-quinone oxidoreductase subunit H</fullName>
        <ecNumber evidence="1">7.1.1.-</ecNumber>
    </recommendedName>
    <alternativeName>
        <fullName evidence="1">NADH dehydrogenase I subunit H</fullName>
    </alternativeName>
    <alternativeName>
        <fullName evidence="1">NDH-1 subunit H</fullName>
    </alternativeName>
</protein>
<accession>Q3JUA2</accession>
<reference key="1">
    <citation type="journal article" date="2010" name="Genome Biol. Evol.">
        <title>Continuing evolution of Burkholderia mallei through genome reduction and large-scale rearrangements.</title>
        <authorList>
            <person name="Losada L."/>
            <person name="Ronning C.M."/>
            <person name="DeShazer D."/>
            <person name="Woods D."/>
            <person name="Fedorova N."/>
            <person name="Kim H.S."/>
            <person name="Shabalina S.A."/>
            <person name="Pearson T.R."/>
            <person name="Brinkac L."/>
            <person name="Tan P."/>
            <person name="Nandi T."/>
            <person name="Crabtree J."/>
            <person name="Badger J."/>
            <person name="Beckstrom-Sternberg S."/>
            <person name="Saqib M."/>
            <person name="Schutzer S.E."/>
            <person name="Keim P."/>
            <person name="Nierman W.C."/>
        </authorList>
    </citation>
    <scope>NUCLEOTIDE SEQUENCE [LARGE SCALE GENOMIC DNA]</scope>
    <source>
        <strain>1710b</strain>
    </source>
</reference>